<geneLocation type="chloroplast"/>
<proteinExistence type="inferred from homology"/>
<feature type="chain" id="PRO_0000360259" description="NAD(P)H-quinone oxidoreductase subunit 6, chloroplastic">
    <location>
        <begin position="1"/>
        <end position="177"/>
    </location>
</feature>
<feature type="transmembrane region" description="Helical" evidence="2">
    <location>
        <begin position="10"/>
        <end position="30"/>
    </location>
</feature>
<feature type="transmembrane region" description="Helical" evidence="2">
    <location>
        <begin position="32"/>
        <end position="52"/>
    </location>
</feature>
<feature type="transmembrane region" description="Helical" evidence="2">
    <location>
        <begin position="61"/>
        <end position="81"/>
    </location>
</feature>
<feature type="transmembrane region" description="Helical" evidence="2">
    <location>
        <begin position="92"/>
        <end position="112"/>
    </location>
</feature>
<feature type="transmembrane region" description="Helical" evidence="2">
    <location>
        <begin position="152"/>
        <end position="172"/>
    </location>
</feature>
<sequence>MDLPGPIHDIFLVFLGSGLILGGLGVVLLTNPVYSAFSLGLVLVCISLFHIPSNSYFVAAAQLLIYVGAINVLIVFAVMFMNGSEYYNYFHLWTVGDGVTSLICTSILFSLIKTILDTSWYGIIWTTRSNQIIEQDLISNVQQIGIHLSTDFYLPFELISIILLVALVGAIAMARQE</sequence>
<dbReference type="EC" id="7.1.1.-"/>
<dbReference type="EMBL" id="EF380354">
    <property type="protein sequence ID" value="ABQ52573.1"/>
    <property type="molecule type" value="Genomic_DNA"/>
</dbReference>
<dbReference type="RefSeq" id="YP_001294324.1">
    <property type="nucleotide sequence ID" value="NC_009600.1"/>
</dbReference>
<dbReference type="SMR" id="A6MMZ8"/>
<dbReference type="GeneID" id="5236712"/>
<dbReference type="GO" id="GO:0009535">
    <property type="term" value="C:chloroplast thylakoid membrane"/>
    <property type="evidence" value="ECO:0007669"/>
    <property type="project" value="UniProtKB-SubCell"/>
</dbReference>
<dbReference type="GO" id="GO:0008137">
    <property type="term" value="F:NADH dehydrogenase (ubiquinone) activity"/>
    <property type="evidence" value="ECO:0007669"/>
    <property type="project" value="InterPro"/>
</dbReference>
<dbReference type="GO" id="GO:0048038">
    <property type="term" value="F:quinone binding"/>
    <property type="evidence" value="ECO:0007669"/>
    <property type="project" value="UniProtKB-KW"/>
</dbReference>
<dbReference type="FunFam" id="1.20.120.1200:FF:000002">
    <property type="entry name" value="NAD(P)H-quinone oxidoreductase subunit 6, chloroplastic"/>
    <property type="match status" value="1"/>
</dbReference>
<dbReference type="Gene3D" id="1.20.120.1200">
    <property type="entry name" value="NADH-ubiquinone/plastoquinone oxidoreductase chain 6, subunit NuoJ"/>
    <property type="match status" value="1"/>
</dbReference>
<dbReference type="InterPro" id="IPR050290">
    <property type="entry name" value="NAD(P)H-Q_Oxidoreduct_6"/>
</dbReference>
<dbReference type="InterPro" id="IPR001457">
    <property type="entry name" value="NADH_UbQ/plastoQ_OxRdtase_su6"/>
</dbReference>
<dbReference type="InterPro" id="IPR042106">
    <property type="entry name" value="Nuo/plastoQ_OxRdtase_6_NuoJ"/>
</dbReference>
<dbReference type="PANTHER" id="PTHR48479">
    <property type="entry name" value="NAD(P)H-QUINONE OXIDOREDUCTASE SUBUNIT 6, CHLOROPLASTIC"/>
    <property type="match status" value="1"/>
</dbReference>
<dbReference type="PANTHER" id="PTHR48479:SF1">
    <property type="entry name" value="NAD(P)H-QUINONE OXIDOREDUCTASE SUBUNIT 6, CHLOROPLASTIC"/>
    <property type="match status" value="1"/>
</dbReference>
<dbReference type="Pfam" id="PF00499">
    <property type="entry name" value="Oxidored_q3"/>
    <property type="match status" value="1"/>
</dbReference>
<comment type="function">
    <text evidence="1">NDH shuttles electrons from NAD(P)H:plastoquinone, via FMN and iron-sulfur (Fe-S) centers, to quinones in the photosynthetic chain and possibly in a chloroplast respiratory chain. The immediate electron acceptor for the enzyme in this species is believed to be plastoquinone. Couples the redox reaction to proton translocation, and thus conserves the redox energy in a proton gradient (By similarity).</text>
</comment>
<comment type="catalytic activity">
    <reaction>
        <text>a plastoquinone + NADH + (n+1) H(+)(in) = a plastoquinol + NAD(+) + n H(+)(out)</text>
        <dbReference type="Rhea" id="RHEA:42608"/>
        <dbReference type="Rhea" id="RHEA-COMP:9561"/>
        <dbReference type="Rhea" id="RHEA-COMP:9562"/>
        <dbReference type="ChEBI" id="CHEBI:15378"/>
        <dbReference type="ChEBI" id="CHEBI:17757"/>
        <dbReference type="ChEBI" id="CHEBI:57540"/>
        <dbReference type="ChEBI" id="CHEBI:57945"/>
        <dbReference type="ChEBI" id="CHEBI:62192"/>
    </reaction>
</comment>
<comment type="catalytic activity">
    <reaction>
        <text>a plastoquinone + NADPH + (n+1) H(+)(in) = a plastoquinol + NADP(+) + n H(+)(out)</text>
        <dbReference type="Rhea" id="RHEA:42612"/>
        <dbReference type="Rhea" id="RHEA-COMP:9561"/>
        <dbReference type="Rhea" id="RHEA-COMP:9562"/>
        <dbReference type="ChEBI" id="CHEBI:15378"/>
        <dbReference type="ChEBI" id="CHEBI:17757"/>
        <dbReference type="ChEBI" id="CHEBI:57783"/>
        <dbReference type="ChEBI" id="CHEBI:58349"/>
        <dbReference type="ChEBI" id="CHEBI:62192"/>
    </reaction>
</comment>
<comment type="subunit">
    <text evidence="1">NDH is composed of at least 16 different subunits, 5 of which are encoded in the nucleus.</text>
</comment>
<comment type="subcellular location">
    <subcellularLocation>
        <location evidence="1">Plastid</location>
        <location evidence="1">Chloroplast thylakoid membrane</location>
        <topology evidence="1">Multi-pass membrane protein</topology>
    </subcellularLocation>
</comment>
<comment type="similarity">
    <text evidence="3">Belongs to the complex I subunit 6 family.</text>
</comment>
<name>NU6C_ILLOL</name>
<protein>
    <recommendedName>
        <fullName>NAD(P)H-quinone oxidoreductase subunit 6, chloroplastic</fullName>
        <ecNumber>7.1.1.-</ecNumber>
    </recommendedName>
    <alternativeName>
        <fullName>NAD(P)H dehydrogenase subunit 6</fullName>
    </alternativeName>
    <alternativeName>
        <fullName>NADH-plastoquinone oxidoreductase subunit 6</fullName>
    </alternativeName>
</protein>
<organism>
    <name type="scientific">Illicium oligandrum</name>
    <name type="common">Star anise</name>
    <dbReference type="NCBI Taxonomy" id="145286"/>
    <lineage>
        <taxon>Eukaryota</taxon>
        <taxon>Viridiplantae</taxon>
        <taxon>Streptophyta</taxon>
        <taxon>Embryophyta</taxon>
        <taxon>Tracheophyta</taxon>
        <taxon>Spermatophyta</taxon>
        <taxon>Magnoliopsida</taxon>
        <taxon>Austrobaileyales</taxon>
        <taxon>Schisandraceae</taxon>
        <taxon>Illicium</taxon>
    </lineage>
</organism>
<evidence type="ECO:0000250" key="1"/>
<evidence type="ECO:0000255" key="2"/>
<evidence type="ECO:0000305" key="3"/>
<reference key="1">
    <citation type="journal article" date="2007" name="Mol. Phylogenet. Evol.">
        <title>Phylogenetic and evolutionary implications of complete chloroplast genome sequences of four early-diverging angiosperms: Buxus (Buxaceae), Chloranthus (Chloranthaceae), Dioscorea (Dioscoreaceae), and Illicium (Schisandraceae).</title>
        <authorList>
            <person name="Hansen D.R."/>
            <person name="Dastidar S.G."/>
            <person name="Cai Z."/>
            <person name="Penaflor C."/>
            <person name="Kuehl J.V."/>
            <person name="Boore J.L."/>
            <person name="Jansen R.K."/>
        </authorList>
    </citation>
    <scope>NUCLEOTIDE SEQUENCE [LARGE SCALE GENOMIC DNA]</scope>
</reference>
<keyword id="KW-0150">Chloroplast</keyword>
<keyword id="KW-0472">Membrane</keyword>
<keyword id="KW-0520">NAD</keyword>
<keyword id="KW-0521">NADP</keyword>
<keyword id="KW-0934">Plastid</keyword>
<keyword id="KW-0618">Plastoquinone</keyword>
<keyword id="KW-0874">Quinone</keyword>
<keyword id="KW-0793">Thylakoid</keyword>
<keyword id="KW-1278">Translocase</keyword>
<keyword id="KW-0812">Transmembrane</keyword>
<keyword id="KW-1133">Transmembrane helix</keyword>
<keyword id="KW-0813">Transport</keyword>
<gene>
    <name type="primary">ndhG</name>
</gene>
<accession>A6MMZ8</accession>